<evidence type="ECO:0000255" key="1">
    <source>
        <dbReference type="HAMAP-Rule" id="MF_00163"/>
    </source>
</evidence>
<reference key="1">
    <citation type="journal article" date="2006" name="J. Bacteriol.">
        <title>Comparative genomic evidence for a close relationship between the dimorphic prosthecate bacteria Hyphomonas neptunium and Caulobacter crescentus.</title>
        <authorList>
            <person name="Badger J.H."/>
            <person name="Hoover T.R."/>
            <person name="Brun Y.V."/>
            <person name="Weiner R.M."/>
            <person name="Laub M.T."/>
            <person name="Alexandre G."/>
            <person name="Mrazek J."/>
            <person name="Ren Q."/>
            <person name="Paulsen I.T."/>
            <person name="Nelson K.E."/>
            <person name="Khouri H.M."/>
            <person name="Radune D."/>
            <person name="Sosa J."/>
            <person name="Dodson R.J."/>
            <person name="Sullivan S.A."/>
            <person name="Rosovitz M.J."/>
            <person name="Madupu R."/>
            <person name="Brinkac L.M."/>
            <person name="Durkin A.S."/>
            <person name="Daugherty S.C."/>
            <person name="Kothari S.P."/>
            <person name="Giglio M.G."/>
            <person name="Zhou L."/>
            <person name="Haft D.H."/>
            <person name="Selengut J.D."/>
            <person name="Davidsen T.M."/>
            <person name="Yang Q."/>
            <person name="Zafar N."/>
            <person name="Ward N.L."/>
        </authorList>
    </citation>
    <scope>NUCLEOTIDE SEQUENCE [LARGE SCALE GENOMIC DNA]</scope>
    <source>
        <strain>ATCC 15444</strain>
    </source>
</reference>
<gene>
    <name evidence="1" type="primary">def</name>
    <name type="ordered locus">HNE_0512</name>
</gene>
<feature type="chain" id="PRO_0000301040" description="Peptide deformylase">
    <location>
        <begin position="1"/>
        <end position="176"/>
    </location>
</feature>
<feature type="active site" evidence="1">
    <location>
        <position position="138"/>
    </location>
</feature>
<feature type="binding site" evidence="1">
    <location>
        <position position="95"/>
    </location>
    <ligand>
        <name>Fe cation</name>
        <dbReference type="ChEBI" id="CHEBI:24875"/>
    </ligand>
</feature>
<feature type="binding site" evidence="1">
    <location>
        <position position="137"/>
    </location>
    <ligand>
        <name>Fe cation</name>
        <dbReference type="ChEBI" id="CHEBI:24875"/>
    </ligand>
</feature>
<feature type="binding site" evidence="1">
    <location>
        <position position="141"/>
    </location>
    <ligand>
        <name>Fe cation</name>
        <dbReference type="ChEBI" id="CHEBI:24875"/>
    </ligand>
</feature>
<sequence length="176" mass="20178">MAIREILTVPDPRLKQVSKPVEGGVTDDIRALMDDMLETMYDAPGIGLAAIQIGVPLRVIVMDLAREGEEPAPRYFVNPEILETIEEKKPYEEGCLSVPDIFDQVERSARCRIRYLDYDGKQVDEWAEDLYAVCIQHEMDHLEGTLFIDYLSRLKRDRAIDKVKKAKIRAIREDAN</sequence>
<dbReference type="EC" id="3.5.1.88" evidence="1"/>
<dbReference type="EMBL" id="CP000158">
    <property type="protein sequence ID" value="ABI78719.1"/>
    <property type="molecule type" value="Genomic_DNA"/>
</dbReference>
<dbReference type="RefSeq" id="WP_011645542.1">
    <property type="nucleotide sequence ID" value="NC_008358.1"/>
</dbReference>
<dbReference type="SMR" id="Q0C4V1"/>
<dbReference type="STRING" id="228405.HNE_0512"/>
<dbReference type="KEGG" id="hne:HNE_0512"/>
<dbReference type="eggNOG" id="COG0242">
    <property type="taxonomic scope" value="Bacteria"/>
</dbReference>
<dbReference type="HOGENOM" id="CLU_061901_2_0_5"/>
<dbReference type="Proteomes" id="UP000001959">
    <property type="component" value="Chromosome"/>
</dbReference>
<dbReference type="GO" id="GO:0046872">
    <property type="term" value="F:metal ion binding"/>
    <property type="evidence" value="ECO:0007669"/>
    <property type="project" value="UniProtKB-KW"/>
</dbReference>
<dbReference type="GO" id="GO:0042586">
    <property type="term" value="F:peptide deformylase activity"/>
    <property type="evidence" value="ECO:0007669"/>
    <property type="project" value="UniProtKB-UniRule"/>
</dbReference>
<dbReference type="GO" id="GO:0043686">
    <property type="term" value="P:co-translational protein modification"/>
    <property type="evidence" value="ECO:0007669"/>
    <property type="project" value="TreeGrafter"/>
</dbReference>
<dbReference type="GO" id="GO:0006412">
    <property type="term" value="P:translation"/>
    <property type="evidence" value="ECO:0007669"/>
    <property type="project" value="UniProtKB-UniRule"/>
</dbReference>
<dbReference type="CDD" id="cd00487">
    <property type="entry name" value="Pep_deformylase"/>
    <property type="match status" value="1"/>
</dbReference>
<dbReference type="Gene3D" id="3.90.45.10">
    <property type="entry name" value="Peptide deformylase"/>
    <property type="match status" value="1"/>
</dbReference>
<dbReference type="HAMAP" id="MF_00163">
    <property type="entry name" value="Pep_deformylase"/>
    <property type="match status" value="1"/>
</dbReference>
<dbReference type="InterPro" id="IPR023635">
    <property type="entry name" value="Peptide_deformylase"/>
</dbReference>
<dbReference type="InterPro" id="IPR036821">
    <property type="entry name" value="Peptide_deformylase_sf"/>
</dbReference>
<dbReference type="NCBIfam" id="TIGR00079">
    <property type="entry name" value="pept_deformyl"/>
    <property type="match status" value="1"/>
</dbReference>
<dbReference type="NCBIfam" id="NF001159">
    <property type="entry name" value="PRK00150.1-3"/>
    <property type="match status" value="1"/>
</dbReference>
<dbReference type="PANTHER" id="PTHR10458">
    <property type="entry name" value="PEPTIDE DEFORMYLASE"/>
    <property type="match status" value="1"/>
</dbReference>
<dbReference type="PANTHER" id="PTHR10458:SF22">
    <property type="entry name" value="PEPTIDE DEFORMYLASE"/>
    <property type="match status" value="1"/>
</dbReference>
<dbReference type="Pfam" id="PF01327">
    <property type="entry name" value="Pep_deformylase"/>
    <property type="match status" value="1"/>
</dbReference>
<dbReference type="PIRSF" id="PIRSF004749">
    <property type="entry name" value="Pep_def"/>
    <property type="match status" value="1"/>
</dbReference>
<dbReference type="PRINTS" id="PR01576">
    <property type="entry name" value="PDEFORMYLASE"/>
</dbReference>
<dbReference type="SUPFAM" id="SSF56420">
    <property type="entry name" value="Peptide deformylase"/>
    <property type="match status" value="1"/>
</dbReference>
<protein>
    <recommendedName>
        <fullName evidence="1">Peptide deformylase</fullName>
        <shortName evidence="1">PDF</shortName>
        <ecNumber evidence="1">3.5.1.88</ecNumber>
    </recommendedName>
    <alternativeName>
        <fullName evidence="1">Polypeptide deformylase</fullName>
    </alternativeName>
</protein>
<comment type="function">
    <text evidence="1">Removes the formyl group from the N-terminal Met of newly synthesized proteins. Requires at least a dipeptide for an efficient rate of reaction. N-terminal L-methionine is a prerequisite for activity but the enzyme has broad specificity at other positions.</text>
</comment>
<comment type="catalytic activity">
    <reaction evidence="1">
        <text>N-terminal N-formyl-L-methionyl-[peptide] + H2O = N-terminal L-methionyl-[peptide] + formate</text>
        <dbReference type="Rhea" id="RHEA:24420"/>
        <dbReference type="Rhea" id="RHEA-COMP:10639"/>
        <dbReference type="Rhea" id="RHEA-COMP:10640"/>
        <dbReference type="ChEBI" id="CHEBI:15377"/>
        <dbReference type="ChEBI" id="CHEBI:15740"/>
        <dbReference type="ChEBI" id="CHEBI:49298"/>
        <dbReference type="ChEBI" id="CHEBI:64731"/>
        <dbReference type="EC" id="3.5.1.88"/>
    </reaction>
</comment>
<comment type="cofactor">
    <cofactor evidence="1">
        <name>Fe(2+)</name>
        <dbReference type="ChEBI" id="CHEBI:29033"/>
    </cofactor>
    <text evidence="1">Binds 1 Fe(2+) ion.</text>
</comment>
<comment type="similarity">
    <text evidence="1">Belongs to the polypeptide deformylase family.</text>
</comment>
<proteinExistence type="inferred from homology"/>
<name>DEF_HYPNA</name>
<accession>Q0C4V1</accession>
<keyword id="KW-0378">Hydrolase</keyword>
<keyword id="KW-0408">Iron</keyword>
<keyword id="KW-0479">Metal-binding</keyword>
<keyword id="KW-0648">Protein biosynthesis</keyword>
<keyword id="KW-1185">Reference proteome</keyword>
<organism>
    <name type="scientific">Hyphomonas neptunium (strain ATCC 15444)</name>
    <dbReference type="NCBI Taxonomy" id="228405"/>
    <lineage>
        <taxon>Bacteria</taxon>
        <taxon>Pseudomonadati</taxon>
        <taxon>Pseudomonadota</taxon>
        <taxon>Alphaproteobacteria</taxon>
        <taxon>Hyphomonadales</taxon>
        <taxon>Hyphomonadaceae</taxon>
        <taxon>Hyphomonas</taxon>
    </lineage>
</organism>